<organism>
    <name type="scientific">Xenopus laevis</name>
    <name type="common">African clawed frog</name>
    <dbReference type="NCBI Taxonomy" id="8355"/>
    <lineage>
        <taxon>Eukaryota</taxon>
        <taxon>Metazoa</taxon>
        <taxon>Chordata</taxon>
        <taxon>Craniata</taxon>
        <taxon>Vertebrata</taxon>
        <taxon>Euteleostomi</taxon>
        <taxon>Amphibia</taxon>
        <taxon>Batrachia</taxon>
        <taxon>Anura</taxon>
        <taxon>Pipoidea</taxon>
        <taxon>Pipidae</taxon>
        <taxon>Xenopodinae</taxon>
        <taxon>Xenopus</taxon>
        <taxon>Xenopus</taxon>
    </lineage>
</organism>
<proteinExistence type="evidence at transcript level"/>
<dbReference type="EMBL" id="BC077776">
    <property type="protein sequence ID" value="AAH77776.1"/>
    <property type="molecule type" value="mRNA"/>
</dbReference>
<dbReference type="RefSeq" id="NP_001086926.1">
    <property type="nucleotide sequence ID" value="NM_001093457.1"/>
</dbReference>
<dbReference type="SMR" id="Q6DD52"/>
<dbReference type="DNASU" id="446761"/>
<dbReference type="GeneID" id="446761"/>
<dbReference type="KEGG" id="xla:446761"/>
<dbReference type="AGR" id="Xenbase:XB-GENE-5962886"/>
<dbReference type="CTD" id="446761"/>
<dbReference type="Xenbase" id="XB-GENE-5962886">
    <property type="gene designation" value="chmp5.L"/>
</dbReference>
<dbReference type="OMA" id="GVKQMQK"/>
<dbReference type="OrthoDB" id="3973241at2759"/>
<dbReference type="Proteomes" id="UP000186698">
    <property type="component" value="Chromosome 6L"/>
</dbReference>
<dbReference type="Bgee" id="446761">
    <property type="expression patterns" value="Expressed in zone of skin and 19 other cell types or tissues"/>
</dbReference>
<dbReference type="GO" id="GO:0005829">
    <property type="term" value="C:cytosol"/>
    <property type="evidence" value="ECO:0007669"/>
    <property type="project" value="UniProtKB-SubCell"/>
</dbReference>
<dbReference type="GO" id="GO:0010008">
    <property type="term" value="C:endosome membrane"/>
    <property type="evidence" value="ECO:0007669"/>
    <property type="project" value="UniProtKB-SubCell"/>
</dbReference>
<dbReference type="GO" id="GO:0005771">
    <property type="term" value="C:multivesicular body"/>
    <property type="evidence" value="ECO:0000318"/>
    <property type="project" value="GO_Central"/>
</dbReference>
<dbReference type="GO" id="GO:0032511">
    <property type="term" value="P:late endosome to vacuole transport via multivesicular body sorting pathway"/>
    <property type="evidence" value="ECO:0000318"/>
    <property type="project" value="GO_Central"/>
</dbReference>
<dbReference type="GO" id="GO:0015031">
    <property type="term" value="P:protein transport"/>
    <property type="evidence" value="ECO:0007669"/>
    <property type="project" value="UniProtKB-KW"/>
</dbReference>
<dbReference type="GO" id="GO:0006900">
    <property type="term" value="P:vesicle budding from membrane"/>
    <property type="evidence" value="ECO:0000318"/>
    <property type="project" value="GO_Central"/>
</dbReference>
<dbReference type="Gene3D" id="6.10.250.1710">
    <property type="match status" value="1"/>
</dbReference>
<dbReference type="Gene3D" id="1.10.287.1060">
    <property type="entry name" value="ESAT-6-like"/>
    <property type="match status" value="1"/>
</dbReference>
<dbReference type="InterPro" id="IPR005024">
    <property type="entry name" value="Snf7_fam"/>
</dbReference>
<dbReference type="PANTHER" id="PTHR22761">
    <property type="entry name" value="CHARGED MULTIVESICULAR BODY PROTEIN"/>
    <property type="match status" value="1"/>
</dbReference>
<dbReference type="PANTHER" id="PTHR22761:SF12">
    <property type="entry name" value="CHARGED MULTIVESICULAR BODY PROTEIN 5"/>
    <property type="match status" value="1"/>
</dbReference>
<dbReference type="Pfam" id="PF03357">
    <property type="entry name" value="Snf7"/>
    <property type="match status" value="1"/>
</dbReference>
<name>CHMP5_XENLA</name>
<reference key="1">
    <citation type="submission" date="2004-07" db="EMBL/GenBank/DDBJ databases">
        <authorList>
            <consortium name="NIH - Xenopus Gene Collection (XGC) project"/>
        </authorList>
    </citation>
    <scope>NUCLEOTIDE SEQUENCE [LARGE SCALE MRNA]</scope>
    <source>
        <tissue>Spleen</tissue>
    </source>
</reference>
<evidence type="ECO:0000250" key="1">
    <source>
        <dbReference type="UniProtKB" id="Q9NZZ3"/>
    </source>
</evidence>
<evidence type="ECO:0000255" key="2"/>
<evidence type="ECO:0000305" key="3"/>
<gene>
    <name type="primary">chmp5</name>
</gene>
<feature type="chain" id="PRO_0000211505" description="Charged multivesicular body protein 5">
    <location>
        <begin position="1"/>
        <end position="219"/>
    </location>
</feature>
<feature type="coiled-coil region" evidence="2">
    <location>
        <begin position="22"/>
        <end position="153"/>
    </location>
</feature>
<accession>Q6DD52</accession>
<sequence>MNRIFGKSKPKVPPPTLTDCITNVDGRAESIEKKISRLDAELIKYKDQMKKMREGPSKNMVKQKALRVLKQKRMYEQQRDNLNQQSFNMEQANYTIQTLKDTKTTVDAMKVGAKEMKKAYKQVKIDQIEDLQDQLEDMMENANEIQEALSRSYGTPEIDEDDLEAELDALGDELLLDDDTSYLDEAASAPAIPEGVPNDSKNKDGVLVDEFGLPQIPAT</sequence>
<comment type="function">
    <text evidence="1">Probable peripherally associated component of the endosomal sorting required for transport complex III (ESCRT-III) which is involved in multivesicular bodies (MVBs) formation and sorting of endosomal cargo proteins into MVBs. MVBs contain intraluminal vesicles (ILVs) that are generated by invagination and scission from the limiting membrane of the endosome and mostly are delivered to lysosomes enabling degradation of membrane proteins, such as stimulated growth factor receptors, lysosomal enzymes and lipids (By similarity).</text>
</comment>
<comment type="subunit">
    <text evidence="1">Probable peripherally associated component of the endosomal sorting required for transport complex III (ESCRT-III).</text>
</comment>
<comment type="subcellular location">
    <subcellularLocation>
        <location evidence="1">Cytoplasm</location>
        <location evidence="1">Cytosol</location>
    </subcellularLocation>
    <subcellularLocation>
        <location evidence="3">Endosome membrane</location>
        <topology evidence="3">Peripheral membrane protein</topology>
    </subcellularLocation>
</comment>
<comment type="similarity">
    <text evidence="3">Belongs to the SNF7 family.</text>
</comment>
<protein>
    <recommendedName>
        <fullName>Charged multivesicular body protein 5</fullName>
    </recommendedName>
    <alternativeName>
        <fullName>Chromatin-modifying protein 5</fullName>
    </alternativeName>
</protein>
<keyword id="KW-0175">Coiled coil</keyword>
<keyword id="KW-0963">Cytoplasm</keyword>
<keyword id="KW-0967">Endosome</keyword>
<keyword id="KW-0472">Membrane</keyword>
<keyword id="KW-0653">Protein transport</keyword>
<keyword id="KW-1185">Reference proteome</keyword>
<keyword id="KW-0813">Transport</keyword>